<evidence type="ECO:0000256" key="1">
    <source>
        <dbReference type="SAM" id="MobiDB-lite"/>
    </source>
</evidence>
<evidence type="ECO:0000269" key="2">
    <source>
    </source>
</evidence>
<evidence type="ECO:0000269" key="3">
    <source>
    </source>
</evidence>
<keyword id="KW-0963">Cytoplasm</keyword>
<keyword id="KW-0597">Phosphoprotein</keyword>
<keyword id="KW-1185">Reference proteome</keyword>
<proteinExistence type="evidence at protein level"/>
<comment type="subcellular location">
    <subcellularLocation>
        <location evidence="2">Cytoplasm</location>
    </subcellularLocation>
    <text>Localizes at the cell tip and the barrier septum.</text>
</comment>
<gene>
    <name type="ORF">SPAC688.07c</name>
</gene>
<feature type="chain" id="PRO_0000304048" description="Uncharacterized protein C688.07c">
    <location>
        <begin position="1"/>
        <end position="1038"/>
    </location>
</feature>
<feature type="region of interest" description="Disordered" evidence="1">
    <location>
        <begin position="1"/>
        <end position="100"/>
    </location>
</feature>
<feature type="region of interest" description="Disordered" evidence="1">
    <location>
        <begin position="144"/>
        <end position="201"/>
    </location>
</feature>
<feature type="region of interest" description="Disordered" evidence="1">
    <location>
        <begin position="360"/>
        <end position="381"/>
    </location>
</feature>
<feature type="region of interest" description="Disordered" evidence="1">
    <location>
        <begin position="422"/>
        <end position="441"/>
    </location>
</feature>
<feature type="region of interest" description="Disordered" evidence="1">
    <location>
        <begin position="454"/>
        <end position="526"/>
    </location>
</feature>
<feature type="region of interest" description="Disordered" evidence="1">
    <location>
        <begin position="556"/>
        <end position="575"/>
    </location>
</feature>
<feature type="region of interest" description="Disordered" evidence="1">
    <location>
        <begin position="803"/>
        <end position="864"/>
    </location>
</feature>
<feature type="region of interest" description="Disordered" evidence="1">
    <location>
        <begin position="940"/>
        <end position="974"/>
    </location>
</feature>
<feature type="region of interest" description="Disordered" evidence="1">
    <location>
        <begin position="1005"/>
        <end position="1024"/>
    </location>
</feature>
<feature type="compositionally biased region" description="Polar residues" evidence="1">
    <location>
        <begin position="1"/>
        <end position="14"/>
    </location>
</feature>
<feature type="compositionally biased region" description="Basic and acidic residues" evidence="1">
    <location>
        <begin position="58"/>
        <end position="71"/>
    </location>
</feature>
<feature type="compositionally biased region" description="Acidic residues" evidence="1">
    <location>
        <begin position="72"/>
        <end position="83"/>
    </location>
</feature>
<feature type="compositionally biased region" description="Low complexity" evidence="1">
    <location>
        <begin position="156"/>
        <end position="179"/>
    </location>
</feature>
<feature type="compositionally biased region" description="Basic and acidic residues" evidence="1">
    <location>
        <begin position="180"/>
        <end position="198"/>
    </location>
</feature>
<feature type="compositionally biased region" description="Basic and acidic residues" evidence="1">
    <location>
        <begin position="426"/>
        <end position="441"/>
    </location>
</feature>
<feature type="compositionally biased region" description="Basic and acidic residues" evidence="1">
    <location>
        <begin position="489"/>
        <end position="505"/>
    </location>
</feature>
<feature type="compositionally biased region" description="Polar residues" evidence="1">
    <location>
        <begin position="506"/>
        <end position="522"/>
    </location>
</feature>
<feature type="compositionally biased region" description="Low complexity" evidence="1">
    <location>
        <begin position="826"/>
        <end position="859"/>
    </location>
</feature>
<feature type="compositionally biased region" description="Polar residues" evidence="1">
    <location>
        <begin position="955"/>
        <end position="974"/>
    </location>
</feature>
<feature type="compositionally biased region" description="Low complexity" evidence="1">
    <location>
        <begin position="1009"/>
        <end position="1020"/>
    </location>
</feature>
<feature type="modified residue" description="Phosphoserine" evidence="3">
    <location>
        <position position="112"/>
    </location>
</feature>
<feature type="modified residue" description="Phosphoserine" evidence="3">
    <location>
        <position position="113"/>
    </location>
</feature>
<feature type="modified residue" description="Phosphoserine" evidence="3">
    <location>
        <position position="114"/>
    </location>
</feature>
<feature type="modified residue" description="Phosphoserine" evidence="3">
    <location>
        <position position="436"/>
    </location>
</feature>
<feature type="modified residue" description="Phosphoserine" evidence="3">
    <location>
        <position position="618"/>
    </location>
</feature>
<feature type="modified residue" description="Phosphoserine" evidence="3">
    <location>
        <position position="856"/>
    </location>
</feature>
<sequence length="1038" mass="113939">MEENTAQKQSNATGLQRHVSGRWISNVPSYEGNEWSSEESESEDKESNLTSSENIGKNPERELNSDGTDRIIEEEEEEDDIENEASSFSEQSENENYDFSYPGTFVYRKAASSSHETLATKVVSADESARLWAEKRRFLLQKLGKDPNSKPIDYKSSMASSSTRSSQSSQVSAIQPQSQDDNRVSDIRQMENRRELNVKRRSVSSPAEDLAIRPLSFSRYKKAEEIPESLPPIKGRDSFSSVRELNESNVFARAPNKNRFSFASVAETGSGSNFSRATSSRSSKTRSVVYEPNHRHTSFFGDTLSNLSSSLNDKKSPNDDHAVLDSELMEQTLPDSAEAVEIANNVKEDIVSTANDDANELDNTSEKATLETSSKPVTEQAIEQSEVVQEVEEGDTNMTTNTILKPTDEIINKGYAYSITSSHSNHSNEKFEQIPSPDEKLSRTDIDTHVKQLQTTKSTDSLSIPFVESPQQNPEEELSDSLSNDFGIDAEKEKDENLSKPEHHPSITSVNSPFLYSPSKQPSGELDEENLKLRLQDSDVDDEVATIRSLKQNNATNSEVETVTNDPSFSQQPGTHSRILRNFDAISSIDSIPDSFSDSAVDLPVDSSKYTLVGKTQSNSNLLQDNAEKHISKSNLEKVDVKGDTSPNSVEQGIEPQAASVVGSPRSSLVSNNSLEEGALLKNSESLESIYGYLSEEPDPALTKLNTEDPFWTKGSSDDEHTIASVEQDVYPYKTSLPTIVEATTSHTESSNSKAPAIEETTTTKVEVVAAHDAVSISSNSSTHKSHSEPLNRDELEVAALSRGSLPEPPKPNKQIVVQEEDQRDTLSLKTSTTGLSSHSKSAENNSTQQSTTSPSINSGASADAVSSGISKKADNSETNLNYFATLDAFVKSPLMSFDGLGELGSTDQRYNFFNQKIQEYSAYDSGLDNWIQFCLEKDGEAPKEAPPPPRSEPVSTTTKLAKRITQPSLSPARSTVTITHNIATEAKKKSKSAANDILHLFKKKAKSEQSNAKSSSSSIKESKKMKTLFGKKLGFKS</sequence>
<reference key="1">
    <citation type="journal article" date="2002" name="Nature">
        <title>The genome sequence of Schizosaccharomyces pombe.</title>
        <authorList>
            <person name="Wood V."/>
            <person name="Gwilliam R."/>
            <person name="Rajandream M.A."/>
            <person name="Lyne M.H."/>
            <person name="Lyne R."/>
            <person name="Stewart A."/>
            <person name="Sgouros J.G."/>
            <person name="Peat N."/>
            <person name="Hayles J."/>
            <person name="Baker S.G."/>
            <person name="Basham D."/>
            <person name="Bowman S."/>
            <person name="Brooks K."/>
            <person name="Brown D."/>
            <person name="Brown S."/>
            <person name="Chillingworth T."/>
            <person name="Churcher C.M."/>
            <person name="Collins M."/>
            <person name="Connor R."/>
            <person name="Cronin A."/>
            <person name="Davis P."/>
            <person name="Feltwell T."/>
            <person name="Fraser A."/>
            <person name="Gentles S."/>
            <person name="Goble A."/>
            <person name="Hamlin N."/>
            <person name="Harris D.E."/>
            <person name="Hidalgo J."/>
            <person name="Hodgson G."/>
            <person name="Holroyd S."/>
            <person name="Hornsby T."/>
            <person name="Howarth S."/>
            <person name="Huckle E.J."/>
            <person name="Hunt S."/>
            <person name="Jagels K."/>
            <person name="James K.D."/>
            <person name="Jones L."/>
            <person name="Jones M."/>
            <person name="Leather S."/>
            <person name="McDonald S."/>
            <person name="McLean J."/>
            <person name="Mooney P."/>
            <person name="Moule S."/>
            <person name="Mungall K.L."/>
            <person name="Murphy L.D."/>
            <person name="Niblett D."/>
            <person name="Odell C."/>
            <person name="Oliver K."/>
            <person name="O'Neil S."/>
            <person name="Pearson D."/>
            <person name="Quail M.A."/>
            <person name="Rabbinowitsch E."/>
            <person name="Rutherford K.M."/>
            <person name="Rutter S."/>
            <person name="Saunders D."/>
            <person name="Seeger K."/>
            <person name="Sharp S."/>
            <person name="Skelton J."/>
            <person name="Simmonds M.N."/>
            <person name="Squares R."/>
            <person name="Squares S."/>
            <person name="Stevens K."/>
            <person name="Taylor K."/>
            <person name="Taylor R.G."/>
            <person name="Tivey A."/>
            <person name="Walsh S.V."/>
            <person name="Warren T."/>
            <person name="Whitehead S."/>
            <person name="Woodward J.R."/>
            <person name="Volckaert G."/>
            <person name="Aert R."/>
            <person name="Robben J."/>
            <person name="Grymonprez B."/>
            <person name="Weltjens I."/>
            <person name="Vanstreels E."/>
            <person name="Rieger M."/>
            <person name="Schaefer M."/>
            <person name="Mueller-Auer S."/>
            <person name="Gabel C."/>
            <person name="Fuchs M."/>
            <person name="Duesterhoeft A."/>
            <person name="Fritzc C."/>
            <person name="Holzer E."/>
            <person name="Moestl D."/>
            <person name="Hilbert H."/>
            <person name="Borzym K."/>
            <person name="Langer I."/>
            <person name="Beck A."/>
            <person name="Lehrach H."/>
            <person name="Reinhardt R."/>
            <person name="Pohl T.M."/>
            <person name="Eger P."/>
            <person name="Zimmermann W."/>
            <person name="Wedler H."/>
            <person name="Wambutt R."/>
            <person name="Purnelle B."/>
            <person name="Goffeau A."/>
            <person name="Cadieu E."/>
            <person name="Dreano S."/>
            <person name="Gloux S."/>
            <person name="Lelaure V."/>
            <person name="Mottier S."/>
            <person name="Galibert F."/>
            <person name="Aves S.J."/>
            <person name="Xiang Z."/>
            <person name="Hunt C."/>
            <person name="Moore K."/>
            <person name="Hurst S.M."/>
            <person name="Lucas M."/>
            <person name="Rochet M."/>
            <person name="Gaillardin C."/>
            <person name="Tallada V.A."/>
            <person name="Garzon A."/>
            <person name="Thode G."/>
            <person name="Daga R.R."/>
            <person name="Cruzado L."/>
            <person name="Jimenez J."/>
            <person name="Sanchez M."/>
            <person name="del Rey F."/>
            <person name="Benito J."/>
            <person name="Dominguez A."/>
            <person name="Revuelta J.L."/>
            <person name="Moreno S."/>
            <person name="Armstrong J."/>
            <person name="Forsburg S.L."/>
            <person name="Cerutti L."/>
            <person name="Lowe T."/>
            <person name="McCombie W.R."/>
            <person name="Paulsen I."/>
            <person name="Potashkin J."/>
            <person name="Shpakovski G.V."/>
            <person name="Ussery D."/>
            <person name="Barrell B.G."/>
            <person name="Nurse P."/>
        </authorList>
    </citation>
    <scope>NUCLEOTIDE SEQUENCE [LARGE SCALE GENOMIC DNA]</scope>
    <source>
        <strain>972 / ATCC 24843</strain>
    </source>
</reference>
<reference key="2">
    <citation type="journal article" date="2006" name="Nat. Biotechnol.">
        <title>ORFeome cloning and global analysis of protein localization in the fission yeast Schizosaccharomyces pombe.</title>
        <authorList>
            <person name="Matsuyama A."/>
            <person name="Arai R."/>
            <person name="Yashiroda Y."/>
            <person name="Shirai A."/>
            <person name="Kamata A."/>
            <person name="Sekido S."/>
            <person name="Kobayashi Y."/>
            <person name="Hashimoto A."/>
            <person name="Hamamoto M."/>
            <person name="Hiraoka Y."/>
            <person name="Horinouchi S."/>
            <person name="Yoshida M."/>
        </authorList>
    </citation>
    <scope>SUBCELLULAR LOCATION [LARGE SCALE ANALYSIS]</scope>
</reference>
<reference key="3">
    <citation type="journal article" date="2008" name="J. Proteome Res.">
        <title>Phosphoproteome analysis of fission yeast.</title>
        <authorList>
            <person name="Wilson-Grady J.T."/>
            <person name="Villen J."/>
            <person name="Gygi S.P."/>
        </authorList>
    </citation>
    <scope>PHOSPHORYLATION [LARGE SCALE ANALYSIS] AT SER-112; SER-113; SER-114; SER-436; SER-618 AND SER-856</scope>
    <scope>IDENTIFICATION BY MASS SPECTROMETRY</scope>
</reference>
<protein>
    <recommendedName>
        <fullName>Uncharacterized protein C688.07c</fullName>
    </recommendedName>
</protein>
<dbReference type="EMBL" id="CU329670">
    <property type="protein sequence ID" value="CAB90773.1"/>
    <property type="molecule type" value="Genomic_DNA"/>
</dbReference>
<dbReference type="BioGRID" id="279890">
    <property type="interactions" value="15"/>
</dbReference>
<dbReference type="STRING" id="284812.Q9P6L9"/>
<dbReference type="iPTMnet" id="Q9P6L9"/>
<dbReference type="PaxDb" id="4896-SPAC688.07c.1"/>
<dbReference type="EnsemblFungi" id="SPAC688.07c.1">
    <property type="protein sequence ID" value="SPAC688.07c.1:pep"/>
    <property type="gene ID" value="SPAC688.07c"/>
</dbReference>
<dbReference type="KEGG" id="spo:2543470"/>
<dbReference type="PomBase" id="SPAC688.07c"/>
<dbReference type="VEuPathDB" id="FungiDB:SPAC688.07c"/>
<dbReference type="HOGENOM" id="CLU_293041_0_0_1"/>
<dbReference type="InParanoid" id="Q9P6L9"/>
<dbReference type="OMA" id="YEGNEWS"/>
<dbReference type="PRO" id="PR:Q9P6L9"/>
<dbReference type="Proteomes" id="UP000002485">
    <property type="component" value="Chromosome I"/>
</dbReference>
<dbReference type="GO" id="GO:0032153">
    <property type="term" value="C:cell division site"/>
    <property type="evidence" value="ECO:0000314"/>
    <property type="project" value="PomBase"/>
</dbReference>
<dbReference type="GO" id="GO:0051286">
    <property type="term" value="C:cell tip"/>
    <property type="evidence" value="ECO:0000314"/>
    <property type="project" value="PomBase"/>
</dbReference>
<dbReference type="GO" id="GO:0005829">
    <property type="term" value="C:cytosol"/>
    <property type="evidence" value="ECO:0007005"/>
    <property type="project" value="PomBase"/>
</dbReference>
<dbReference type="GO" id="GO:0008093">
    <property type="term" value="F:cytoskeletal anchor activity"/>
    <property type="evidence" value="ECO:0000314"/>
    <property type="project" value="PomBase"/>
</dbReference>
<dbReference type="GO" id="GO:0005546">
    <property type="term" value="F:phosphatidylinositol-4,5-bisphosphate binding"/>
    <property type="evidence" value="ECO:0000314"/>
    <property type="project" value="PomBase"/>
</dbReference>
<dbReference type="GO" id="GO:0070273">
    <property type="term" value="F:phosphatidylinositol-4-phosphate binding"/>
    <property type="evidence" value="ECO:0000314"/>
    <property type="project" value="PomBase"/>
</dbReference>
<dbReference type="GO" id="GO:0000281">
    <property type="term" value="P:mitotic cytokinesis"/>
    <property type="evidence" value="ECO:0000315"/>
    <property type="project" value="PomBase"/>
</dbReference>
<dbReference type="GO" id="GO:0140278">
    <property type="term" value="P:mitotic division septum assembly"/>
    <property type="evidence" value="ECO:0000315"/>
    <property type="project" value="PomBase"/>
</dbReference>
<name>YKQ7_SCHPO</name>
<organism>
    <name type="scientific">Schizosaccharomyces pombe (strain 972 / ATCC 24843)</name>
    <name type="common">Fission yeast</name>
    <dbReference type="NCBI Taxonomy" id="284812"/>
    <lineage>
        <taxon>Eukaryota</taxon>
        <taxon>Fungi</taxon>
        <taxon>Dikarya</taxon>
        <taxon>Ascomycota</taxon>
        <taxon>Taphrinomycotina</taxon>
        <taxon>Schizosaccharomycetes</taxon>
        <taxon>Schizosaccharomycetales</taxon>
        <taxon>Schizosaccharomycetaceae</taxon>
        <taxon>Schizosaccharomyces</taxon>
    </lineage>
</organism>
<accession>Q9P6L9</accession>